<evidence type="ECO:0000250" key="1"/>
<evidence type="ECO:0000255" key="2">
    <source>
        <dbReference type="PROSITE-ProRule" id="PRU00108"/>
    </source>
</evidence>
<evidence type="ECO:0000256" key="3">
    <source>
        <dbReference type="SAM" id="MobiDB-lite"/>
    </source>
</evidence>
<evidence type="ECO:0000305" key="4"/>
<proteinExistence type="inferred from homology"/>
<protein>
    <recommendedName>
        <fullName>Homeobox protein Hox-D10a</fullName>
    </recommendedName>
</protein>
<organism>
    <name type="scientific">Takifugu rubripes</name>
    <name type="common">Japanese pufferfish</name>
    <name type="synonym">Fugu rubripes</name>
    <dbReference type="NCBI Taxonomy" id="31033"/>
    <lineage>
        <taxon>Eukaryota</taxon>
        <taxon>Metazoa</taxon>
        <taxon>Chordata</taxon>
        <taxon>Craniata</taxon>
        <taxon>Vertebrata</taxon>
        <taxon>Euteleostomi</taxon>
        <taxon>Actinopterygii</taxon>
        <taxon>Neopterygii</taxon>
        <taxon>Teleostei</taxon>
        <taxon>Neoteleostei</taxon>
        <taxon>Acanthomorphata</taxon>
        <taxon>Eupercaria</taxon>
        <taxon>Tetraodontiformes</taxon>
        <taxon>Tetradontoidea</taxon>
        <taxon>Tetraodontidae</taxon>
        <taxon>Takifugu</taxon>
    </lineage>
</organism>
<dbReference type="EMBL" id="DQ481668">
    <property type="protein sequence ID" value="ABF22464.1"/>
    <property type="molecule type" value="Genomic_DNA"/>
</dbReference>
<dbReference type="SMR" id="Q1KKT0"/>
<dbReference type="FunCoup" id="Q1KKT0">
    <property type="interactions" value="504"/>
</dbReference>
<dbReference type="STRING" id="31033.ENSTRUP00000044928"/>
<dbReference type="eggNOG" id="KOG0487">
    <property type="taxonomic scope" value="Eukaryota"/>
</dbReference>
<dbReference type="InParanoid" id="Q1KKT0"/>
<dbReference type="Proteomes" id="UP000005226">
    <property type="component" value="Unplaced"/>
</dbReference>
<dbReference type="GO" id="GO:0005634">
    <property type="term" value="C:nucleus"/>
    <property type="evidence" value="ECO:0007669"/>
    <property type="project" value="UniProtKB-SubCell"/>
</dbReference>
<dbReference type="GO" id="GO:0000981">
    <property type="term" value="F:DNA-binding transcription factor activity, RNA polymerase II-specific"/>
    <property type="evidence" value="ECO:0007669"/>
    <property type="project" value="InterPro"/>
</dbReference>
<dbReference type="GO" id="GO:0000978">
    <property type="term" value="F:RNA polymerase II cis-regulatory region sequence-specific DNA binding"/>
    <property type="evidence" value="ECO:0007669"/>
    <property type="project" value="TreeGrafter"/>
</dbReference>
<dbReference type="CDD" id="cd00086">
    <property type="entry name" value="homeodomain"/>
    <property type="match status" value="1"/>
</dbReference>
<dbReference type="FunFam" id="1.10.10.60:FF:000018">
    <property type="entry name" value="Homeobox A10"/>
    <property type="match status" value="1"/>
</dbReference>
<dbReference type="Gene3D" id="1.10.10.60">
    <property type="entry name" value="Homeodomain-like"/>
    <property type="match status" value="1"/>
</dbReference>
<dbReference type="InterPro" id="IPR001356">
    <property type="entry name" value="HD"/>
</dbReference>
<dbReference type="InterPro" id="IPR020479">
    <property type="entry name" value="HD_metazoa"/>
</dbReference>
<dbReference type="InterPro" id="IPR017970">
    <property type="entry name" value="Homeobox_CS"/>
</dbReference>
<dbReference type="InterPro" id="IPR009057">
    <property type="entry name" value="Homeodomain-like_sf"/>
</dbReference>
<dbReference type="InterPro" id="IPR046333">
    <property type="entry name" value="HXA10/ABDB-like"/>
</dbReference>
<dbReference type="PANTHER" id="PTHR45874">
    <property type="entry name" value="HOMEOBOX PROTEIN ABDOMINAL-B"/>
    <property type="match status" value="1"/>
</dbReference>
<dbReference type="PANTHER" id="PTHR45874:SF5">
    <property type="entry name" value="HOMEOBOX PROTEIN HOX-D10"/>
    <property type="match status" value="1"/>
</dbReference>
<dbReference type="Pfam" id="PF00046">
    <property type="entry name" value="Homeodomain"/>
    <property type="match status" value="1"/>
</dbReference>
<dbReference type="PRINTS" id="PR00024">
    <property type="entry name" value="HOMEOBOX"/>
</dbReference>
<dbReference type="SMART" id="SM00389">
    <property type="entry name" value="HOX"/>
    <property type="match status" value="1"/>
</dbReference>
<dbReference type="SUPFAM" id="SSF46689">
    <property type="entry name" value="Homeodomain-like"/>
    <property type="match status" value="1"/>
</dbReference>
<dbReference type="PROSITE" id="PS00027">
    <property type="entry name" value="HOMEOBOX_1"/>
    <property type="match status" value="1"/>
</dbReference>
<dbReference type="PROSITE" id="PS50071">
    <property type="entry name" value="HOMEOBOX_2"/>
    <property type="match status" value="1"/>
</dbReference>
<gene>
    <name type="primary">hoxd10a</name>
</gene>
<sequence length="336" mass="37706">MSFPSSSPAANTFLVDSLISACRTDSFYTGSSMYMPPGSEMGTYGMQTCGLLPAFSKRGEVNHQNVGMNVHSYIPQIDNWTDPSRPCRIESSNQDVQTTHSHQNIKEESNCCMYSDKRVPKVSSSEVPVYSNVAPESCPVDGPEIPVPGYFRLSQTYATGKHQEPYCHDPPDQSPTLIQLTPKPQPAPASATFADGESEKNKVPPEPATSRTPIQVESPKSATVEKICSPEASASSPELLQKEGKDSKSDQPANNWLTAKSGRKKRCPYTKHQTLELEKEFLFNMYLTRERRLEISRSVNLTDRQVKIWFQNRRMKLKKMSRENRIRELTSNLTFS</sequence>
<keyword id="KW-0217">Developmental protein</keyword>
<keyword id="KW-0238">DNA-binding</keyword>
<keyword id="KW-0371">Homeobox</keyword>
<keyword id="KW-0539">Nucleus</keyword>
<keyword id="KW-1185">Reference proteome</keyword>
<keyword id="KW-0804">Transcription</keyword>
<keyword id="KW-0805">Transcription regulation</keyword>
<accession>Q1KKT0</accession>
<comment type="function">
    <text evidence="1">Sequence-specific transcription factor which is part of a developmental regulatory system that provides cells with specific positional identities on the anterior-posterior axis.</text>
</comment>
<comment type="subcellular location">
    <subcellularLocation>
        <location evidence="2">Nucleus</location>
    </subcellularLocation>
</comment>
<comment type="similarity">
    <text evidence="4">Belongs to the Abd-B homeobox family.</text>
</comment>
<reference key="1">
    <citation type="journal article" date="2006" name="Proc. Natl. Acad. Sci. U.S.A.">
        <title>Highly conserved syntenic blocks at the vertebrate Hox loci and conserved regulatory elements within and outside Hox gene clusters.</title>
        <authorList>
            <person name="Lee A.P."/>
            <person name="Koh E.G.L."/>
            <person name="Tay A."/>
            <person name="Brenner S."/>
            <person name="Venkatesh B."/>
        </authorList>
    </citation>
    <scope>NUCLEOTIDE SEQUENCE [GENOMIC DNA]</scope>
</reference>
<feature type="chain" id="PRO_0000265999" description="Homeobox protein Hox-D10a">
    <location>
        <begin position="1"/>
        <end position="336"/>
    </location>
</feature>
<feature type="DNA-binding region" description="Homeobox" evidence="2">
    <location>
        <begin position="262"/>
        <end position="321"/>
    </location>
</feature>
<feature type="region of interest" description="Disordered" evidence="3">
    <location>
        <begin position="161"/>
        <end position="256"/>
    </location>
</feature>
<feature type="compositionally biased region" description="Basic and acidic residues" evidence="3">
    <location>
        <begin position="161"/>
        <end position="171"/>
    </location>
</feature>
<feature type="compositionally biased region" description="Polar residues" evidence="3">
    <location>
        <begin position="209"/>
        <end position="221"/>
    </location>
</feature>
<feature type="compositionally biased region" description="Basic and acidic residues" evidence="3">
    <location>
        <begin position="240"/>
        <end position="249"/>
    </location>
</feature>
<name>HXDAA_TAKRU</name>